<protein>
    <recommendedName>
        <fullName>Uncharacterized mitochondrial protein AtMg01130</fullName>
    </recommendedName>
    <alternativeName>
        <fullName>ORF106f</fullName>
    </alternativeName>
</protein>
<evidence type="ECO:0000256" key="1">
    <source>
        <dbReference type="SAM" id="MobiDB-lite"/>
    </source>
</evidence>
<evidence type="ECO:0000305" key="2"/>
<geneLocation type="mitochondrion"/>
<accession>P92544</accession>
<accession>Q1ZXX0</accession>
<organism>
    <name type="scientific">Arabidopsis thaliana</name>
    <name type="common">Mouse-ear cress</name>
    <dbReference type="NCBI Taxonomy" id="3702"/>
    <lineage>
        <taxon>Eukaryota</taxon>
        <taxon>Viridiplantae</taxon>
        <taxon>Streptophyta</taxon>
        <taxon>Embryophyta</taxon>
        <taxon>Tracheophyta</taxon>
        <taxon>Spermatophyta</taxon>
        <taxon>Magnoliopsida</taxon>
        <taxon>eudicotyledons</taxon>
        <taxon>Gunneridae</taxon>
        <taxon>Pentapetalae</taxon>
        <taxon>rosids</taxon>
        <taxon>malvids</taxon>
        <taxon>Brassicales</taxon>
        <taxon>Brassicaceae</taxon>
        <taxon>Camelineae</taxon>
        <taxon>Arabidopsis</taxon>
    </lineage>
</organism>
<dbReference type="EMBL" id="Y08501">
    <property type="protein sequence ID" value="CAA69797.1"/>
    <property type="molecule type" value="Genomic_DNA"/>
</dbReference>
<dbReference type="EMBL" id="BK010421">
    <property type="status" value="NOT_ANNOTATED_CDS"/>
    <property type="molecule type" value="Genomic_DNA"/>
</dbReference>
<dbReference type="RefSeq" id="NP_085566.1">
    <property type="nucleotide sequence ID" value="NC_001284.2"/>
</dbReference>
<dbReference type="STRING" id="3702.P92544"/>
<dbReference type="PaxDb" id="3702-ATMG01130.1"/>
<dbReference type="EnsemblPlants" id="ATMG01130.1">
    <property type="protein sequence ID" value="ATMG01130.1"/>
    <property type="gene ID" value="ATMG01130"/>
</dbReference>
<dbReference type="Gramene" id="ATMG01130.1">
    <property type="protein sequence ID" value="ATMG01130.1"/>
    <property type="gene ID" value="ATMG01130"/>
</dbReference>
<dbReference type="Araport" id="ATMG01130"/>
<dbReference type="TAIR" id="ATMG01130">
    <property type="gene designation" value="ORF106F"/>
</dbReference>
<dbReference type="eggNOG" id="ENOG502SAB4">
    <property type="taxonomic scope" value="Eukaryota"/>
</dbReference>
<dbReference type="HOGENOM" id="CLU_2226869_0_0_1"/>
<dbReference type="InParanoid" id="P92544"/>
<dbReference type="OMA" id="FHLIRYV"/>
<dbReference type="PRO" id="PR:P92544"/>
<dbReference type="Proteomes" id="UP000006548">
    <property type="component" value="Mitochondrion MT"/>
</dbReference>
<dbReference type="ExpressionAtlas" id="P92544">
    <property type="expression patterns" value="baseline and differential"/>
</dbReference>
<dbReference type="GO" id="GO:0005739">
    <property type="term" value="C:mitochondrion"/>
    <property type="evidence" value="ECO:0007669"/>
    <property type="project" value="UniProtKB-SubCell"/>
</dbReference>
<reference key="1">
    <citation type="journal article" date="1997" name="Nat. Genet.">
        <title>The mitochondrial genome of Arabidopsis thaliana contains 57 genes in 366,924 nucleotides.</title>
        <authorList>
            <person name="Unseld M."/>
            <person name="Marienfeld J.R."/>
            <person name="Brandt P."/>
            <person name="Brennicke A."/>
        </authorList>
    </citation>
    <scope>NUCLEOTIDE SEQUENCE [LARGE SCALE GENOMIC DNA]</scope>
    <source>
        <strain>cv. C24</strain>
    </source>
</reference>
<reference key="2">
    <citation type="journal article" date="2018" name="Plant Cell">
        <title>Correction of persistent errors in Arabidopsis reference mitochondrial genomes.</title>
        <authorList>
            <person name="Sloan D.B."/>
            <person name="Wu Z."/>
            <person name="Sharbrough J."/>
        </authorList>
    </citation>
    <scope>NUCLEOTIDE SEQUENCE [LARGE SCALE GENOMIC DNA]</scope>
    <source>
        <strain>cv. Columbia</strain>
    </source>
</reference>
<sequence>MMVTALQILFSLIRYVTETIRSVSVLFSDSEDEPDDEASSSDKDVSDATLPARTTYSIVIFLAGSVRRDKREMLSISQKGTLSPAMLPRPAYRGIEREDRGGVQSK</sequence>
<comment type="subcellular location">
    <subcellularLocation>
        <location evidence="2">Mitochondrion</location>
    </subcellularLocation>
</comment>
<gene>
    <name type="ordered locus">AtMg01130</name>
</gene>
<proteinExistence type="predicted"/>
<feature type="chain" id="PRO_0000196814" description="Uncharacterized mitochondrial protein AtMg01130">
    <location>
        <begin position="1"/>
        <end position="106"/>
    </location>
</feature>
<feature type="region of interest" description="Disordered" evidence="1">
    <location>
        <begin position="27"/>
        <end position="47"/>
    </location>
</feature>
<feature type="region of interest" description="Disordered" evidence="1">
    <location>
        <begin position="83"/>
        <end position="106"/>
    </location>
</feature>
<feature type="compositionally biased region" description="Acidic residues" evidence="1">
    <location>
        <begin position="29"/>
        <end position="39"/>
    </location>
</feature>
<feature type="compositionally biased region" description="Basic and acidic residues" evidence="1">
    <location>
        <begin position="94"/>
        <end position="106"/>
    </location>
</feature>
<name>M1130_ARATH</name>
<keyword id="KW-0496">Mitochondrion</keyword>
<keyword id="KW-1185">Reference proteome</keyword>